<gene>
    <name evidence="1" type="primary">pyrR</name>
    <name type="ordered locus">BcerKBAB4_3718</name>
</gene>
<protein>
    <recommendedName>
        <fullName evidence="1">Bifunctional protein PyrR</fullName>
    </recommendedName>
    <domain>
        <recommendedName>
            <fullName evidence="1">Pyrimidine operon regulatory protein</fullName>
        </recommendedName>
    </domain>
    <domain>
        <recommendedName>
            <fullName evidence="1">Uracil phosphoribosyltransferase</fullName>
            <shortName evidence="1">UPRTase</shortName>
            <ecNumber evidence="1">2.4.2.9</ecNumber>
        </recommendedName>
    </domain>
</protein>
<evidence type="ECO:0000255" key="1">
    <source>
        <dbReference type="HAMAP-Rule" id="MF_01219"/>
    </source>
</evidence>
<proteinExistence type="inferred from homology"/>
<accession>A9VTD1</accession>
<dbReference type="EC" id="2.4.2.9" evidence="1"/>
<dbReference type="EMBL" id="CP000903">
    <property type="protein sequence ID" value="ABY44887.1"/>
    <property type="molecule type" value="Genomic_DNA"/>
</dbReference>
<dbReference type="RefSeq" id="WP_001156489.1">
    <property type="nucleotide sequence ID" value="NZ_CAKMRX030000111.1"/>
</dbReference>
<dbReference type="SMR" id="A9VTD1"/>
<dbReference type="GeneID" id="66266542"/>
<dbReference type="KEGG" id="bwe:BcerKBAB4_3718"/>
<dbReference type="eggNOG" id="COG2065">
    <property type="taxonomic scope" value="Bacteria"/>
</dbReference>
<dbReference type="HOGENOM" id="CLU_094234_2_1_9"/>
<dbReference type="Proteomes" id="UP000002154">
    <property type="component" value="Chromosome"/>
</dbReference>
<dbReference type="GO" id="GO:0003723">
    <property type="term" value="F:RNA binding"/>
    <property type="evidence" value="ECO:0007669"/>
    <property type="project" value="UniProtKB-UniRule"/>
</dbReference>
<dbReference type="GO" id="GO:0004845">
    <property type="term" value="F:uracil phosphoribosyltransferase activity"/>
    <property type="evidence" value="ECO:0007669"/>
    <property type="project" value="UniProtKB-UniRule"/>
</dbReference>
<dbReference type="GO" id="GO:0006353">
    <property type="term" value="P:DNA-templated transcription termination"/>
    <property type="evidence" value="ECO:0007669"/>
    <property type="project" value="UniProtKB-UniRule"/>
</dbReference>
<dbReference type="CDD" id="cd06223">
    <property type="entry name" value="PRTases_typeI"/>
    <property type="match status" value="1"/>
</dbReference>
<dbReference type="FunFam" id="3.40.50.2020:FF:000020">
    <property type="entry name" value="Bifunctional protein PyrR"/>
    <property type="match status" value="1"/>
</dbReference>
<dbReference type="Gene3D" id="3.40.50.2020">
    <property type="match status" value="1"/>
</dbReference>
<dbReference type="HAMAP" id="MF_01219">
    <property type="entry name" value="PyrR"/>
    <property type="match status" value="1"/>
</dbReference>
<dbReference type="InterPro" id="IPR000836">
    <property type="entry name" value="PRibTrfase_dom"/>
</dbReference>
<dbReference type="InterPro" id="IPR029057">
    <property type="entry name" value="PRTase-like"/>
</dbReference>
<dbReference type="InterPro" id="IPR023050">
    <property type="entry name" value="PyrR"/>
</dbReference>
<dbReference type="InterPro" id="IPR050137">
    <property type="entry name" value="PyrR_bifunctional"/>
</dbReference>
<dbReference type="NCBIfam" id="NF003545">
    <property type="entry name" value="PRK05205.1-1"/>
    <property type="match status" value="1"/>
</dbReference>
<dbReference type="NCBIfam" id="NF003547">
    <property type="entry name" value="PRK05205.1-3"/>
    <property type="match status" value="1"/>
</dbReference>
<dbReference type="NCBIfam" id="NF003548">
    <property type="entry name" value="PRK05205.1-4"/>
    <property type="match status" value="1"/>
</dbReference>
<dbReference type="NCBIfam" id="NF003549">
    <property type="entry name" value="PRK05205.1-5"/>
    <property type="match status" value="1"/>
</dbReference>
<dbReference type="PANTHER" id="PTHR11608">
    <property type="entry name" value="BIFUNCTIONAL PROTEIN PYRR"/>
    <property type="match status" value="1"/>
</dbReference>
<dbReference type="PANTHER" id="PTHR11608:SF0">
    <property type="entry name" value="BIFUNCTIONAL PROTEIN PYRR"/>
    <property type="match status" value="1"/>
</dbReference>
<dbReference type="Pfam" id="PF00156">
    <property type="entry name" value="Pribosyltran"/>
    <property type="match status" value="1"/>
</dbReference>
<dbReference type="SUPFAM" id="SSF53271">
    <property type="entry name" value="PRTase-like"/>
    <property type="match status" value="1"/>
</dbReference>
<name>PYRR_BACMK</name>
<sequence>MQEKAVVLDDQMIRRALTRISHEIVERNKGVDNCVLVGIKTRGIFIAQRLAERIGQIEGKEMEVGELDITLYRDDLTLQSKHKEPLVKGSDIPVDITKKKVILVDDVLYTGRTVRAAMDALMDLGRPSQIQLAVLVDRGHRELPIRADYVGKNIPTSSEERIEVDLQETDQQDRVSIYDK</sequence>
<keyword id="KW-0328">Glycosyltransferase</keyword>
<keyword id="KW-0694">RNA-binding</keyword>
<keyword id="KW-0804">Transcription</keyword>
<keyword id="KW-0805">Transcription regulation</keyword>
<keyword id="KW-0806">Transcription termination</keyword>
<keyword id="KW-0808">Transferase</keyword>
<feature type="chain" id="PRO_1000139188" description="Bifunctional protein PyrR">
    <location>
        <begin position="1"/>
        <end position="180"/>
    </location>
</feature>
<feature type="short sequence motif" description="PRPP-binding" evidence="1">
    <location>
        <begin position="101"/>
        <end position="113"/>
    </location>
</feature>
<reference key="1">
    <citation type="journal article" date="2008" name="Chem. Biol. Interact.">
        <title>Extending the Bacillus cereus group genomics to putative food-borne pathogens of different toxicity.</title>
        <authorList>
            <person name="Lapidus A."/>
            <person name="Goltsman E."/>
            <person name="Auger S."/>
            <person name="Galleron N."/>
            <person name="Segurens B."/>
            <person name="Dossat C."/>
            <person name="Land M.L."/>
            <person name="Broussolle V."/>
            <person name="Brillard J."/>
            <person name="Guinebretiere M.-H."/>
            <person name="Sanchis V."/>
            <person name="Nguen-the C."/>
            <person name="Lereclus D."/>
            <person name="Richardson P."/>
            <person name="Wincker P."/>
            <person name="Weissenbach J."/>
            <person name="Ehrlich S.D."/>
            <person name="Sorokin A."/>
        </authorList>
    </citation>
    <scope>NUCLEOTIDE SEQUENCE [LARGE SCALE GENOMIC DNA]</scope>
    <source>
        <strain>KBAB4</strain>
    </source>
</reference>
<comment type="function">
    <text evidence="1">Regulates transcriptional attenuation of the pyrimidine nucleotide (pyr) operon by binding in a uridine-dependent manner to specific sites on pyr mRNA. This disrupts an antiterminator hairpin in the RNA and favors formation of a downstream transcription terminator, leading to a reduced expression of downstream genes.</text>
</comment>
<comment type="function">
    <text evidence="1">Also displays a weak uracil phosphoribosyltransferase activity which is not physiologically significant.</text>
</comment>
<comment type="catalytic activity">
    <reaction evidence="1">
        <text>UMP + diphosphate = 5-phospho-alpha-D-ribose 1-diphosphate + uracil</text>
        <dbReference type="Rhea" id="RHEA:13017"/>
        <dbReference type="ChEBI" id="CHEBI:17568"/>
        <dbReference type="ChEBI" id="CHEBI:33019"/>
        <dbReference type="ChEBI" id="CHEBI:57865"/>
        <dbReference type="ChEBI" id="CHEBI:58017"/>
        <dbReference type="EC" id="2.4.2.9"/>
    </reaction>
</comment>
<comment type="subunit">
    <text evidence="1">Homodimer and homohexamer; in equilibrium.</text>
</comment>
<comment type="similarity">
    <text evidence="1">Belongs to the purine/pyrimidine phosphoribosyltransferase family. PyrR subfamily.</text>
</comment>
<organism>
    <name type="scientific">Bacillus mycoides (strain KBAB4)</name>
    <name type="common">Bacillus weihenstephanensis</name>
    <dbReference type="NCBI Taxonomy" id="315730"/>
    <lineage>
        <taxon>Bacteria</taxon>
        <taxon>Bacillati</taxon>
        <taxon>Bacillota</taxon>
        <taxon>Bacilli</taxon>
        <taxon>Bacillales</taxon>
        <taxon>Bacillaceae</taxon>
        <taxon>Bacillus</taxon>
        <taxon>Bacillus cereus group</taxon>
    </lineage>
</organism>